<organism>
    <name type="scientific">Botryotinia fuckeliana (strain B05.10)</name>
    <name type="common">Noble rot fungus</name>
    <name type="synonym">Botrytis cinerea</name>
    <dbReference type="NCBI Taxonomy" id="332648"/>
    <lineage>
        <taxon>Eukaryota</taxon>
        <taxon>Fungi</taxon>
        <taxon>Dikarya</taxon>
        <taxon>Ascomycota</taxon>
        <taxon>Pezizomycotina</taxon>
        <taxon>Leotiomycetes</taxon>
        <taxon>Helotiales</taxon>
        <taxon>Sclerotiniaceae</taxon>
        <taxon>Botrytis</taxon>
    </lineage>
</organism>
<gene>
    <name type="primary">nip1</name>
    <name type="ORF">BC1G_06212</name>
    <name type="ORF">BCIN_03g06940</name>
</gene>
<sequence>MSRFFRGDSSSDSSSDEEEDLYSDDEEVQEQPEEESSEDDSEEDDDDDDDSDSSSDDGAGKKTGANAFLKDDSDSDSESSGDEGVKVVKSAKNKRFEELEATAKAIENGEKINDWGSISAEFDKLNRQVAKLLQSGTIPKVYIKAIADLEDFMNETLAKQKVTPKKMNATNSRGLNAVKQKIKKASKEHQKDIDSFRADKDAYMESEDEEVVAPKQKKPRSSAAQDVAADDDDEGWGTVGKGGRTLQFTPESILKHLRTILESRGKKNTDRNEQIKIMEKLYEVAATPYQRIRVLLTIISTRFDMTTGTQTFMSQEQWKAAEKEFGTLLSVLETSREYVVVETAEPWEDDEKLPTVAEGGKFAIPGSVVSYVERLDDELTRSLQHIDPHTAEYIERLSDESDLYNNIVRTMLYQEEISKDASLNEPQRSLNRVVMRRLEHVYFKPSAVIKILDENCWKAVPAELNSTITPRGSVEDAKTLVNVLCNYLYINTEGEGLTKARAMLCQIYFEALHDNYYKARDMMLMSHLQETINSFDVHSQILFNRTLVQVGLCAFRAGLVYEAQTTLQEICGSGRQKELLAQGVMIQRYNQVTPDQERLEKQRQLPFHMHINLELLECVYLTCSMLLEIPLFAQTGSSPDIKKRVISKTYRRMLEYHERQIFTGPPENTRDHVMQASKALAQGEWKRATEFIHSIKIWELMSKPEEIKAMLSAQIQEEGLRTYLFTYAPYYDTLSVSRLSSMFDLSDRKVAAIVSKMISHEELAAALDQVSSSIIFRKGVELSRLQSLALSLSDKASGLIESNERTLETRTQGTANAFERQGGRGGRGGNRGGRGGGRGGRGGISNAPRQAGGTQFTGGALGAAVGSRA</sequence>
<keyword id="KW-0963">Cytoplasm</keyword>
<keyword id="KW-0396">Initiation factor</keyword>
<keyword id="KW-0648">Protein biosynthesis</keyword>
<keyword id="KW-1185">Reference proteome</keyword>
<dbReference type="EMBL" id="CP009807">
    <property type="protein sequence ID" value="ATZ48479.1"/>
    <property type="molecule type" value="Genomic_DNA"/>
</dbReference>
<dbReference type="SMR" id="A6S043"/>
<dbReference type="EnsemblFungi" id="Bcin03g06940.1">
    <property type="protein sequence ID" value="Bcin03p06940.1"/>
    <property type="gene ID" value="Bcin03g06940"/>
</dbReference>
<dbReference type="GeneID" id="5436074"/>
<dbReference type="KEGG" id="bfu:BCIN_03g06940"/>
<dbReference type="VEuPathDB" id="FungiDB:Bcin03g06940"/>
<dbReference type="OMA" id="FRCGLIK"/>
<dbReference type="OrthoDB" id="29647at2759"/>
<dbReference type="Proteomes" id="UP000001798">
    <property type="component" value="Chromosome bcin03"/>
</dbReference>
<dbReference type="GO" id="GO:0016282">
    <property type="term" value="C:eukaryotic 43S preinitiation complex"/>
    <property type="evidence" value="ECO:0007669"/>
    <property type="project" value="UniProtKB-UniRule"/>
</dbReference>
<dbReference type="GO" id="GO:0033290">
    <property type="term" value="C:eukaryotic 48S preinitiation complex"/>
    <property type="evidence" value="ECO:0007669"/>
    <property type="project" value="UniProtKB-UniRule"/>
</dbReference>
<dbReference type="GO" id="GO:0071540">
    <property type="term" value="C:eukaryotic translation initiation factor 3 complex, eIF3e"/>
    <property type="evidence" value="ECO:0007669"/>
    <property type="project" value="EnsemblFungi"/>
</dbReference>
<dbReference type="GO" id="GO:0071541">
    <property type="term" value="C:eukaryotic translation initiation factor 3 complex, eIF3m"/>
    <property type="evidence" value="ECO:0007669"/>
    <property type="project" value="EnsemblFungi"/>
</dbReference>
<dbReference type="GO" id="GO:0003723">
    <property type="term" value="F:RNA binding"/>
    <property type="evidence" value="ECO:0007669"/>
    <property type="project" value="InterPro"/>
</dbReference>
<dbReference type="GO" id="GO:0003743">
    <property type="term" value="F:translation initiation factor activity"/>
    <property type="evidence" value="ECO:0007669"/>
    <property type="project" value="UniProtKB-UniRule"/>
</dbReference>
<dbReference type="GO" id="GO:0031369">
    <property type="term" value="F:translation initiation factor binding"/>
    <property type="evidence" value="ECO:0007669"/>
    <property type="project" value="InterPro"/>
</dbReference>
<dbReference type="GO" id="GO:0001732">
    <property type="term" value="P:formation of cytoplasmic translation initiation complex"/>
    <property type="evidence" value="ECO:0007669"/>
    <property type="project" value="UniProtKB-UniRule"/>
</dbReference>
<dbReference type="FunFam" id="1.10.10.10:FF:000300">
    <property type="entry name" value="Eukaryotic translation initiation factor 3 subunit C"/>
    <property type="match status" value="1"/>
</dbReference>
<dbReference type="Gene3D" id="1.10.10.10">
    <property type="entry name" value="Winged helix-like DNA-binding domain superfamily/Winged helix DNA-binding domain"/>
    <property type="match status" value="1"/>
</dbReference>
<dbReference type="HAMAP" id="MF_03002">
    <property type="entry name" value="eIF3c"/>
    <property type="match status" value="1"/>
</dbReference>
<dbReference type="InterPro" id="IPR027516">
    <property type="entry name" value="EIF3C"/>
</dbReference>
<dbReference type="InterPro" id="IPR008905">
    <property type="entry name" value="EIF3C_N_dom"/>
</dbReference>
<dbReference type="InterPro" id="IPR000717">
    <property type="entry name" value="PCI_dom"/>
</dbReference>
<dbReference type="InterPro" id="IPR036388">
    <property type="entry name" value="WH-like_DNA-bd_sf"/>
</dbReference>
<dbReference type="InterPro" id="IPR036390">
    <property type="entry name" value="WH_DNA-bd_sf"/>
</dbReference>
<dbReference type="PANTHER" id="PTHR13937">
    <property type="entry name" value="EUKARYOTIC TRANSLATION INITATION FACTOR 3, SUBUNIT 8 EIF3S8 -RELATED"/>
    <property type="match status" value="1"/>
</dbReference>
<dbReference type="PANTHER" id="PTHR13937:SF0">
    <property type="entry name" value="EUKARYOTIC TRANSLATION INITIATION FACTOR 3 SUBUNIT C-RELATED"/>
    <property type="match status" value="1"/>
</dbReference>
<dbReference type="Pfam" id="PF05470">
    <property type="entry name" value="eIF-3c_N"/>
    <property type="match status" value="1"/>
</dbReference>
<dbReference type="Pfam" id="PF01399">
    <property type="entry name" value="PCI"/>
    <property type="match status" value="1"/>
</dbReference>
<dbReference type="SMART" id="SM00088">
    <property type="entry name" value="PINT"/>
    <property type="match status" value="1"/>
</dbReference>
<dbReference type="SUPFAM" id="SSF46785">
    <property type="entry name" value="Winged helix' DNA-binding domain"/>
    <property type="match status" value="1"/>
</dbReference>
<dbReference type="PROSITE" id="PS50250">
    <property type="entry name" value="PCI"/>
    <property type="match status" value="1"/>
</dbReference>
<proteinExistence type="inferred from homology"/>
<name>EIF3C_BOTFB</name>
<reference key="1">
    <citation type="journal article" date="2011" name="PLoS Genet.">
        <title>Genomic analysis of the necrotrophic fungal pathogens Sclerotinia sclerotiorum and Botrytis cinerea.</title>
        <authorList>
            <person name="Amselem J."/>
            <person name="Cuomo C.A."/>
            <person name="van Kan J.A.L."/>
            <person name="Viaud M."/>
            <person name="Benito E.P."/>
            <person name="Couloux A."/>
            <person name="Coutinho P.M."/>
            <person name="de Vries R.P."/>
            <person name="Dyer P.S."/>
            <person name="Fillinger S."/>
            <person name="Fournier E."/>
            <person name="Gout L."/>
            <person name="Hahn M."/>
            <person name="Kohn L."/>
            <person name="Lapalu N."/>
            <person name="Plummer K.M."/>
            <person name="Pradier J.-M."/>
            <person name="Quevillon E."/>
            <person name="Sharon A."/>
            <person name="Simon A."/>
            <person name="ten Have A."/>
            <person name="Tudzynski B."/>
            <person name="Tudzynski P."/>
            <person name="Wincker P."/>
            <person name="Andrew M."/>
            <person name="Anthouard V."/>
            <person name="Beever R.E."/>
            <person name="Beffa R."/>
            <person name="Benoit I."/>
            <person name="Bouzid O."/>
            <person name="Brault B."/>
            <person name="Chen Z."/>
            <person name="Choquer M."/>
            <person name="Collemare J."/>
            <person name="Cotton P."/>
            <person name="Danchin E.G."/>
            <person name="Da Silva C."/>
            <person name="Gautier A."/>
            <person name="Giraud C."/>
            <person name="Giraud T."/>
            <person name="Gonzalez C."/>
            <person name="Grossetete S."/>
            <person name="Gueldener U."/>
            <person name="Henrissat B."/>
            <person name="Howlett B.J."/>
            <person name="Kodira C."/>
            <person name="Kretschmer M."/>
            <person name="Lappartient A."/>
            <person name="Leroch M."/>
            <person name="Levis C."/>
            <person name="Mauceli E."/>
            <person name="Neuveglise C."/>
            <person name="Oeser B."/>
            <person name="Pearson M."/>
            <person name="Poulain J."/>
            <person name="Poussereau N."/>
            <person name="Quesneville H."/>
            <person name="Rascle C."/>
            <person name="Schumacher J."/>
            <person name="Segurens B."/>
            <person name="Sexton A."/>
            <person name="Silva E."/>
            <person name="Sirven C."/>
            <person name="Soanes D.M."/>
            <person name="Talbot N.J."/>
            <person name="Templeton M."/>
            <person name="Yandava C."/>
            <person name="Yarden O."/>
            <person name="Zeng Q."/>
            <person name="Rollins J.A."/>
            <person name="Lebrun M.-H."/>
            <person name="Dickman M."/>
        </authorList>
    </citation>
    <scope>NUCLEOTIDE SEQUENCE [LARGE SCALE GENOMIC DNA]</scope>
    <source>
        <strain>B05.10</strain>
    </source>
</reference>
<reference key="2">
    <citation type="journal article" date="2012" name="Eukaryot. Cell">
        <title>Genome update of Botrytis cinerea strains B05.10 and T4.</title>
        <authorList>
            <person name="Staats M."/>
            <person name="van Kan J.A.L."/>
        </authorList>
    </citation>
    <scope>NUCLEOTIDE SEQUENCE [LARGE SCALE GENOMIC DNA]</scope>
    <scope>GENOME REANNOTATION</scope>
    <source>
        <strain>B05.10</strain>
    </source>
</reference>
<reference key="3">
    <citation type="journal article" date="2017" name="Mol. Plant Pathol.">
        <title>A gapless genome sequence of the fungus Botrytis cinerea.</title>
        <authorList>
            <person name="van Kan J.A.L."/>
            <person name="Stassen J.H.M."/>
            <person name="Mosbach A."/>
            <person name="van der Lee T.A.J."/>
            <person name="Faino L."/>
            <person name="Farmer A.D."/>
            <person name="Papasotiriou D.G."/>
            <person name="Zhou S."/>
            <person name="Seidl M.F."/>
            <person name="Cottam E."/>
            <person name="Edel D."/>
            <person name="Hahn M."/>
            <person name="Schwartz D.C."/>
            <person name="Dietrich R.A."/>
            <person name="Widdison S."/>
            <person name="Scalliet G."/>
        </authorList>
    </citation>
    <scope>NUCLEOTIDE SEQUENCE [LARGE SCALE GENOMIC DNA]</scope>
    <scope>GENOME REANNOTATION</scope>
    <source>
        <strain>B05.10</strain>
    </source>
</reference>
<accession>A6S043</accession>
<accession>A0A384JD07</accession>
<evidence type="ECO:0000255" key="1">
    <source>
        <dbReference type="HAMAP-Rule" id="MF_03002"/>
    </source>
</evidence>
<evidence type="ECO:0000255" key="2">
    <source>
        <dbReference type="PROSITE-ProRule" id="PRU01185"/>
    </source>
</evidence>
<evidence type="ECO:0000256" key="3">
    <source>
        <dbReference type="SAM" id="MobiDB-lite"/>
    </source>
</evidence>
<protein>
    <recommendedName>
        <fullName evidence="1">Eukaryotic translation initiation factor 3 subunit C</fullName>
        <shortName evidence="1">eIF3c</shortName>
    </recommendedName>
    <alternativeName>
        <fullName evidence="1">Eukaryotic translation initiation factor 3 93 kDa subunit homolog</fullName>
        <shortName evidence="1">eIF3 p93</shortName>
    </alternativeName>
    <alternativeName>
        <fullName evidence="1">Translation initiation factor eIF3, p93 subunit homolog</fullName>
    </alternativeName>
</protein>
<comment type="function">
    <text evidence="1">Component of the eukaryotic translation initiation factor 3 (eIF-3) complex, which is involved in protein synthesis of a specialized repertoire of mRNAs and, together with other initiation factors, stimulates binding of mRNA and methionyl-tRNAi to the 40S ribosome. The eIF-3 complex specifically targets and initiates translation of a subset of mRNAs involved in cell proliferation.</text>
</comment>
<comment type="subunit">
    <text evidence="1">Component of the eukaryotic translation initiation factor 3 (eIF-3) complex.</text>
</comment>
<comment type="subcellular location">
    <subcellularLocation>
        <location evidence="1">Cytoplasm</location>
    </subcellularLocation>
</comment>
<comment type="similarity">
    <text evidence="1">Belongs to the eIF-3 subunit C family.</text>
</comment>
<feature type="chain" id="PRO_0000366880" description="Eukaryotic translation initiation factor 3 subunit C">
    <location>
        <begin position="1"/>
        <end position="869"/>
    </location>
</feature>
<feature type="domain" description="PCI" evidence="2">
    <location>
        <begin position="607"/>
        <end position="781"/>
    </location>
</feature>
<feature type="region of interest" description="Disordered" evidence="3">
    <location>
        <begin position="1"/>
        <end position="92"/>
    </location>
</feature>
<feature type="region of interest" description="Disordered" evidence="3">
    <location>
        <begin position="182"/>
        <end position="242"/>
    </location>
</feature>
<feature type="region of interest" description="Disordered" evidence="3">
    <location>
        <begin position="803"/>
        <end position="869"/>
    </location>
</feature>
<feature type="compositionally biased region" description="Acidic residues" evidence="3">
    <location>
        <begin position="14"/>
        <end position="55"/>
    </location>
</feature>
<feature type="compositionally biased region" description="Basic and acidic residues" evidence="3">
    <location>
        <begin position="185"/>
        <end position="203"/>
    </location>
</feature>
<feature type="compositionally biased region" description="Gly residues" evidence="3">
    <location>
        <begin position="823"/>
        <end position="843"/>
    </location>
</feature>